<proteinExistence type="evidence at protein level"/>
<accession>A0A0E2IV13</accession>
<keyword id="KW-0002">3D-structure</keyword>
<keyword id="KW-1283">Bacterial microcompartment</keyword>
<keyword id="KW-0813">Transport</keyword>
<sequence>MIEELGKIDRIIQESVPGKQITLAHVIAAPIEAVYECLGVDHEGAIGVVSLTPNETAIIAADIAGKAANIDICFVDRFTGSVMFSGDIQSVETSLEDILEYFKNSLGFSTVPLTKS</sequence>
<comment type="function">
    <text evidence="6">A minor shell protein of the choline degradation-specific bacterial microcompartment (BMC). Proteins such as this one with circularly permuted BMC domains may play a key role in conferring heterogeneity and flexibility in this BMC.</text>
</comment>
<comment type="pathway">
    <text evidence="6">Amine and polyamine metabolism; choline degradation.</text>
</comment>
<comment type="subunit">
    <text evidence="1 3 8 9 10 11">Has been crystallized in 5 structures (all are mutated, 3 have an N-terminal His-tag), most are homohexameric with a central pore. In two the homohexamer lies flat with a beta-barrel on the flat face created by the protruding N termini of the six chains (PubMed:32885887). In 2 others the hexamer is not flat but has a six-fold screw axis; the screw pitch is 33.8 or 41.9 Angstroms depending on the structure (PubMed:32885887). Interacts with the BMC major shell protein (By similarity).</text>
</comment>
<comment type="subcellular location">
    <subcellularLocation>
        <location evidence="6">Bacterial microcompartment</location>
    </subcellularLocation>
</comment>
<comment type="domain">
    <text evidence="3">One side of the hexamer is concave and lined by hydrophobic residues, the other side has a slightly protruding, 6-stranded beta-barrel.</text>
</comment>
<comment type="similarity">
    <text evidence="2">Belongs to the EutS/PduU family.</text>
</comment>
<name>CUTR_STRIS</name>
<organism>
    <name type="scientific">Streptococcus intermedius (strain ATCC 27335 / DSM 20573 / CCUG 32759 / CIP 103248 / JCM 12996 / LMG 17840 / NCTC 11324 / SK54 / 1877)</name>
    <dbReference type="NCBI Taxonomy" id="1095731"/>
    <lineage>
        <taxon>Bacteria</taxon>
        <taxon>Bacillati</taxon>
        <taxon>Bacillota</taxon>
        <taxon>Bacilli</taxon>
        <taxon>Lactobacillales</taxon>
        <taxon>Streptococcaceae</taxon>
        <taxon>Streptococcus</taxon>
        <taxon>Streptococcus anginosus group</taxon>
    </lineage>
</organism>
<evidence type="ECO:0000250" key="1">
    <source>
        <dbReference type="UniProtKB" id="P0DUV8"/>
    </source>
</evidence>
<evidence type="ECO:0000255" key="2">
    <source>
        <dbReference type="PROSITE-ProRule" id="PRU01279"/>
    </source>
</evidence>
<evidence type="ECO:0000269" key="3">
    <source>
    </source>
</evidence>
<evidence type="ECO:0000303" key="4">
    <source>
    </source>
</evidence>
<evidence type="ECO:0000305" key="5"/>
<evidence type="ECO:0000305" key="6">
    <source>
    </source>
</evidence>
<evidence type="ECO:0007744" key="7">
    <source>
        <dbReference type="PDB" id="6XPH"/>
    </source>
</evidence>
<evidence type="ECO:0007744" key="8">
    <source>
        <dbReference type="PDB" id="6XPI"/>
    </source>
</evidence>
<evidence type="ECO:0007744" key="9">
    <source>
        <dbReference type="PDB" id="6XPJ"/>
    </source>
</evidence>
<evidence type="ECO:0007744" key="10">
    <source>
        <dbReference type="PDB" id="6XPK"/>
    </source>
</evidence>
<evidence type="ECO:0007744" key="11">
    <source>
        <dbReference type="PDB" id="6XPL"/>
    </source>
</evidence>
<evidence type="ECO:0007829" key="12">
    <source>
        <dbReference type="PDB" id="6XPJ"/>
    </source>
</evidence>
<gene>
    <name evidence="4" type="primary">cutR</name>
    <name type="ORF">HMPREF1654_00416</name>
</gene>
<protein>
    <recommendedName>
        <fullName evidence="4">Bacterial microcompartment shell protein CutR</fullName>
    </recommendedName>
    <alternativeName>
        <fullName evidence="5">Bacterial microcompartment protein homohexamer</fullName>
        <shortName evidence="5">BMC-H</shortName>
    </alternativeName>
    <alternativeName>
        <fullName>Propanediol utilization protein CutR</fullName>
    </alternativeName>
</protein>
<reference key="1">
    <citation type="submission" date="2013-05" db="EMBL/GenBank/DDBJ databases">
        <title>The Genome Sequence of Streptococcus intermedius ATCC 27335.</title>
        <authorList>
            <consortium name="The Broad Institute Genomics Platform"/>
            <person name="Earl A."/>
            <person name="Ward D."/>
            <person name="Feldgarden M."/>
            <person name="Gevers D."/>
            <person name="Leonetti C."/>
            <person name="Kirega A."/>
            <person name="Dewhirst F.E."/>
            <person name="Izard J."/>
            <person name="Walker B."/>
            <person name="Young S."/>
            <person name="Zeng Q."/>
            <person name="Gargeya S."/>
            <person name="Fitzgerald M."/>
            <person name="Haas B."/>
            <person name="Abouelleil A."/>
            <person name="Allen A.W."/>
            <person name="Alvarado L."/>
            <person name="Arachchi H.M."/>
            <person name="Berlin A.M."/>
            <person name="Chapman S.B."/>
            <person name="Gainer-Dewar J."/>
            <person name="Goldberg J."/>
            <person name="Griggs A."/>
            <person name="Gujja S."/>
            <person name="Hansen M."/>
            <person name="Howarth C."/>
            <person name="Imamovic A."/>
            <person name="Ireland A."/>
            <person name="Larimer J."/>
            <person name="McCowan C."/>
            <person name="Murphy C."/>
            <person name="Pearson M."/>
            <person name="Poon T.W."/>
            <person name="Priest M."/>
            <person name="Roberts A."/>
            <person name="Saif S."/>
            <person name="Shea T."/>
            <person name="Sisk P."/>
            <person name="Sykes S."/>
            <person name="Wortman J."/>
            <person name="Nusbaum C."/>
            <person name="Birren B."/>
        </authorList>
    </citation>
    <scope>NUCLEOTIDE SEQUENCE [LARGE SCALE GENOMIC DNA]</scope>
    <source>
        <strain>ATCC 27335 / DSM 20573 / CCUG 32759 / CIP 103248 / JCM 12996 / LMG 17840 / NCTC 11324 / SK54 / 1877</strain>
    </source>
</reference>
<reference evidence="7 8 9 10 11" key="2">
    <citation type="journal article" date="2020" name="Protein Sci.">
        <title>Symmetry breaking and structural polymorphism in a bacterial microcompartment shell protein for choline utilization.</title>
        <authorList>
            <person name="Ochoa J.M."/>
            <person name="Nguyen V.N."/>
            <person name="Nie M."/>
            <person name="Sawaya M.R."/>
            <person name="Bobik T.A."/>
            <person name="Yeates T.O."/>
        </authorList>
    </citation>
    <scope>X-RAY CRYSTALLOGRAPHY (1.50 ANGSTROMS) OF MUTATED PROTEINS</scope>
    <scope>SUBUNIT</scope>
    <scope>SUBCELLULAR LOCATION</scope>
    <scope>DOMAIN</scope>
</reference>
<dbReference type="EMBL" id="ATFK01000001">
    <property type="protein sequence ID" value="EPH05253.1"/>
    <property type="molecule type" value="Genomic_DNA"/>
</dbReference>
<dbReference type="RefSeq" id="WP_004234014.1">
    <property type="nucleotide sequence ID" value="NZ_ATFK01000001.1"/>
</dbReference>
<dbReference type="PDB" id="6XPH">
    <property type="method" value="X-ray"/>
    <property type="resolution" value="1.80 A"/>
    <property type="chains" value="A/B=1-116"/>
</dbReference>
<dbReference type="PDB" id="6XPI">
    <property type="method" value="X-ray"/>
    <property type="resolution" value="2.60 A"/>
    <property type="chains" value="A/B/C/D/E/F=1-116"/>
</dbReference>
<dbReference type="PDB" id="6XPJ">
    <property type="method" value="X-ray"/>
    <property type="resolution" value="1.50 A"/>
    <property type="chains" value="A/B/C=1-116"/>
</dbReference>
<dbReference type="PDB" id="6XPK">
    <property type="method" value="X-ray"/>
    <property type="resolution" value="2.80 A"/>
    <property type="chains" value="A=1-116"/>
</dbReference>
<dbReference type="PDB" id="6XPL">
    <property type="method" value="X-ray"/>
    <property type="resolution" value="3.30 A"/>
    <property type="chains" value="A=1-116"/>
</dbReference>
<dbReference type="PDBsum" id="6XPH"/>
<dbReference type="PDBsum" id="6XPI"/>
<dbReference type="PDBsum" id="6XPJ"/>
<dbReference type="PDBsum" id="6XPK"/>
<dbReference type="PDBsum" id="6XPL"/>
<dbReference type="SMR" id="A0A0E2IV13"/>
<dbReference type="PATRIC" id="fig|1316583.3.peg.414"/>
<dbReference type="UniPathway" id="UPA01069"/>
<dbReference type="GO" id="GO:0031469">
    <property type="term" value="C:bacterial microcompartment"/>
    <property type="evidence" value="ECO:0007669"/>
    <property type="project" value="UniProtKB-SubCell"/>
</dbReference>
<dbReference type="Gene3D" id="3.30.70.1710">
    <property type="match status" value="1"/>
</dbReference>
<dbReference type="InterPro" id="IPR000249">
    <property type="entry name" value="BMC_dom"/>
</dbReference>
<dbReference type="InterPro" id="IPR037233">
    <property type="entry name" value="CcmK-like_sf"/>
</dbReference>
<dbReference type="InterPro" id="IPR009307">
    <property type="entry name" value="EutS/PduU/CutR"/>
</dbReference>
<dbReference type="PANTHER" id="PTHR40449:SF2">
    <property type="entry name" value="BACTERIAL MICROCOMPARTMENT SHELL PROTEIN EUTS"/>
    <property type="match status" value="1"/>
</dbReference>
<dbReference type="PANTHER" id="PTHR40449">
    <property type="entry name" value="ETHANOLAMINE UTILIZATION PROTEIN EUTS"/>
    <property type="match status" value="1"/>
</dbReference>
<dbReference type="Pfam" id="PF00936">
    <property type="entry name" value="BMC"/>
    <property type="match status" value="1"/>
</dbReference>
<dbReference type="PIRSF" id="PIRSF012296">
    <property type="entry name" value="EutS_PduU"/>
    <property type="match status" value="1"/>
</dbReference>
<dbReference type="SMART" id="SM00877">
    <property type="entry name" value="BMC"/>
    <property type="match status" value="1"/>
</dbReference>
<dbReference type="SUPFAM" id="SSF143414">
    <property type="entry name" value="CcmK-like"/>
    <property type="match status" value="1"/>
</dbReference>
<feature type="chain" id="PRO_0000454249" description="Bacterial microcompartment shell protein CutR">
    <location>
        <begin position="1"/>
        <end position="116"/>
    </location>
</feature>
<feature type="domain" description="BMC circularly permuted" evidence="2">
    <location>
        <begin position="10"/>
        <end position="108"/>
    </location>
</feature>
<feature type="helix" evidence="12">
    <location>
        <begin position="1"/>
        <end position="6"/>
    </location>
</feature>
<feature type="strand" evidence="12">
    <location>
        <begin position="10"/>
        <end position="15"/>
    </location>
</feature>
<feature type="strand" evidence="12">
    <location>
        <begin position="20"/>
        <end position="29"/>
    </location>
</feature>
<feature type="helix" evidence="12">
    <location>
        <begin position="32"/>
        <end position="38"/>
    </location>
</feature>
<feature type="strand" evidence="12">
    <location>
        <begin position="44"/>
        <end position="53"/>
    </location>
</feature>
<feature type="helix" evidence="12">
    <location>
        <begin position="54"/>
        <end position="56"/>
    </location>
</feature>
<feature type="helix" evidence="12">
    <location>
        <begin position="57"/>
        <end position="67"/>
    </location>
</feature>
<feature type="strand" evidence="12">
    <location>
        <begin position="71"/>
        <end position="76"/>
    </location>
</feature>
<feature type="turn" evidence="12">
    <location>
        <begin position="77"/>
        <end position="80"/>
    </location>
</feature>
<feature type="strand" evidence="12">
    <location>
        <begin position="81"/>
        <end position="86"/>
    </location>
</feature>
<feature type="helix" evidence="12">
    <location>
        <begin position="88"/>
        <end position="104"/>
    </location>
</feature>
<feature type="strand" evidence="12">
    <location>
        <begin position="114"/>
        <end position="116"/>
    </location>
</feature>